<feature type="chain" id="PRO_1000188758" description="Xanthine-guanine phosphoribosyltransferase">
    <location>
        <begin position="1"/>
        <end position="152"/>
    </location>
</feature>
<feature type="binding site" evidence="1">
    <location>
        <begin position="37"/>
        <end position="38"/>
    </location>
    <ligand>
        <name>5-phospho-alpha-D-ribose 1-diphosphate</name>
        <dbReference type="ChEBI" id="CHEBI:58017"/>
    </ligand>
</feature>
<feature type="binding site" evidence="1">
    <location>
        <position position="69"/>
    </location>
    <ligand>
        <name>5-phospho-alpha-D-ribose 1-diphosphate</name>
        <dbReference type="ChEBI" id="CHEBI:58017"/>
    </ligand>
</feature>
<feature type="binding site" evidence="1">
    <location>
        <position position="69"/>
    </location>
    <ligand>
        <name>GMP</name>
        <dbReference type="ChEBI" id="CHEBI:58115"/>
    </ligand>
</feature>
<feature type="binding site" evidence="1">
    <location>
        <begin position="88"/>
        <end position="96"/>
    </location>
    <ligand>
        <name>5-phospho-alpha-D-ribose 1-diphosphate</name>
        <dbReference type="ChEBI" id="CHEBI:58017"/>
    </ligand>
</feature>
<feature type="binding site" evidence="1">
    <location>
        <position position="89"/>
    </location>
    <ligand>
        <name>Mg(2+)</name>
        <dbReference type="ChEBI" id="CHEBI:18420"/>
    </ligand>
</feature>
<feature type="binding site" evidence="1">
    <location>
        <begin position="92"/>
        <end position="96"/>
    </location>
    <ligand>
        <name>GMP</name>
        <dbReference type="ChEBI" id="CHEBI:58115"/>
    </ligand>
</feature>
<feature type="binding site" evidence="1">
    <location>
        <position position="92"/>
    </location>
    <ligand>
        <name>guanine</name>
        <dbReference type="ChEBI" id="CHEBI:16235"/>
    </ligand>
</feature>
<feature type="binding site" evidence="1">
    <location>
        <position position="92"/>
    </location>
    <ligand>
        <name>xanthine</name>
        <dbReference type="ChEBI" id="CHEBI:17712"/>
    </ligand>
</feature>
<feature type="binding site" evidence="1">
    <location>
        <begin position="134"/>
        <end position="135"/>
    </location>
    <ligand>
        <name>GMP</name>
        <dbReference type="ChEBI" id="CHEBI:58115"/>
    </ligand>
</feature>
<feature type="binding site" evidence="1">
    <location>
        <position position="135"/>
    </location>
    <ligand>
        <name>guanine</name>
        <dbReference type="ChEBI" id="CHEBI:16235"/>
    </ligand>
</feature>
<feature type="binding site" evidence="1">
    <location>
        <position position="135"/>
    </location>
    <ligand>
        <name>xanthine</name>
        <dbReference type="ChEBI" id="CHEBI:17712"/>
    </ligand>
</feature>
<sequence>MSEKYVVTWDMLQIHARKLASRLMPSEQWKGIIAVSRGGLVPGALLARELGIRHVDTVCISSYDHDNQRELKVLKRAEGDGEGFIVIDDLVDTGGTAVAIREMYPKAHFVTIFAKPAGRPLVDDYVIDIPQNTWIEQPWDMGVVFVPPISGR</sequence>
<gene>
    <name evidence="1" type="primary">gpt</name>
    <name type="ordered locus">SPC_0328</name>
</gene>
<reference key="1">
    <citation type="journal article" date="2009" name="PLoS ONE">
        <title>Salmonella paratyphi C: genetic divergence from Salmonella choleraesuis and pathogenic convergence with Salmonella typhi.</title>
        <authorList>
            <person name="Liu W.-Q."/>
            <person name="Feng Y."/>
            <person name="Wang Y."/>
            <person name="Zou Q.-H."/>
            <person name="Chen F."/>
            <person name="Guo J.-T."/>
            <person name="Peng Y.-H."/>
            <person name="Jin Y."/>
            <person name="Li Y.-G."/>
            <person name="Hu S.-N."/>
            <person name="Johnston R.N."/>
            <person name="Liu G.-R."/>
            <person name="Liu S.-L."/>
        </authorList>
    </citation>
    <scope>NUCLEOTIDE SEQUENCE [LARGE SCALE GENOMIC DNA]</scope>
    <source>
        <strain>RKS4594</strain>
    </source>
</reference>
<dbReference type="EC" id="2.4.2.-" evidence="1"/>
<dbReference type="EC" id="2.4.2.22" evidence="1"/>
<dbReference type="EMBL" id="CP000857">
    <property type="protein sequence ID" value="ACN44515.1"/>
    <property type="molecule type" value="Genomic_DNA"/>
</dbReference>
<dbReference type="RefSeq" id="WP_001292018.1">
    <property type="nucleotide sequence ID" value="NC_012125.1"/>
</dbReference>
<dbReference type="SMR" id="C0Q6T6"/>
<dbReference type="GeneID" id="66754798"/>
<dbReference type="KEGG" id="sei:SPC_0328"/>
<dbReference type="HOGENOM" id="CLU_080904_3_0_6"/>
<dbReference type="UniPathway" id="UPA00602">
    <property type="reaction ID" value="UER00658"/>
</dbReference>
<dbReference type="UniPathway" id="UPA00909">
    <property type="reaction ID" value="UER00887"/>
</dbReference>
<dbReference type="Proteomes" id="UP000001599">
    <property type="component" value="Chromosome"/>
</dbReference>
<dbReference type="GO" id="GO:0005829">
    <property type="term" value="C:cytosol"/>
    <property type="evidence" value="ECO:0007669"/>
    <property type="project" value="TreeGrafter"/>
</dbReference>
<dbReference type="GO" id="GO:0005886">
    <property type="term" value="C:plasma membrane"/>
    <property type="evidence" value="ECO:0007669"/>
    <property type="project" value="UniProtKB-SubCell"/>
</dbReference>
<dbReference type="GO" id="GO:0052657">
    <property type="term" value="F:guanine phosphoribosyltransferase activity"/>
    <property type="evidence" value="ECO:0007669"/>
    <property type="project" value="RHEA"/>
</dbReference>
<dbReference type="GO" id="GO:0004422">
    <property type="term" value="F:hypoxanthine phosphoribosyltransferase activity"/>
    <property type="evidence" value="ECO:0007669"/>
    <property type="project" value="TreeGrafter"/>
</dbReference>
<dbReference type="GO" id="GO:0000287">
    <property type="term" value="F:magnesium ion binding"/>
    <property type="evidence" value="ECO:0007669"/>
    <property type="project" value="UniProtKB-UniRule"/>
</dbReference>
<dbReference type="GO" id="GO:0000310">
    <property type="term" value="F:xanthine phosphoribosyltransferase activity"/>
    <property type="evidence" value="ECO:0007669"/>
    <property type="project" value="UniProtKB-UniRule"/>
</dbReference>
<dbReference type="GO" id="GO:0032263">
    <property type="term" value="P:GMP salvage"/>
    <property type="evidence" value="ECO:0007669"/>
    <property type="project" value="UniProtKB-UniRule"/>
</dbReference>
<dbReference type="GO" id="GO:0032264">
    <property type="term" value="P:IMP salvage"/>
    <property type="evidence" value="ECO:0007669"/>
    <property type="project" value="TreeGrafter"/>
</dbReference>
<dbReference type="GO" id="GO:0006166">
    <property type="term" value="P:purine ribonucleoside salvage"/>
    <property type="evidence" value="ECO:0007669"/>
    <property type="project" value="UniProtKB-KW"/>
</dbReference>
<dbReference type="GO" id="GO:0032265">
    <property type="term" value="P:XMP salvage"/>
    <property type="evidence" value="ECO:0007669"/>
    <property type="project" value="UniProtKB-UniRule"/>
</dbReference>
<dbReference type="CDD" id="cd06223">
    <property type="entry name" value="PRTases_typeI"/>
    <property type="match status" value="1"/>
</dbReference>
<dbReference type="FunFam" id="3.40.50.2020:FF:000009">
    <property type="entry name" value="Xanthine phosphoribosyltransferase"/>
    <property type="match status" value="1"/>
</dbReference>
<dbReference type="Gene3D" id="3.40.50.2020">
    <property type="match status" value="1"/>
</dbReference>
<dbReference type="HAMAP" id="MF_01903">
    <property type="entry name" value="XGPRT"/>
    <property type="match status" value="1"/>
</dbReference>
<dbReference type="InterPro" id="IPR000836">
    <property type="entry name" value="PRibTrfase_dom"/>
</dbReference>
<dbReference type="InterPro" id="IPR029057">
    <property type="entry name" value="PRTase-like"/>
</dbReference>
<dbReference type="InterPro" id="IPR023747">
    <property type="entry name" value="Xanthine_Guanine_PRibTrfase"/>
</dbReference>
<dbReference type="NCBIfam" id="NF006613">
    <property type="entry name" value="PRK09177.1"/>
    <property type="match status" value="1"/>
</dbReference>
<dbReference type="PANTHER" id="PTHR39563">
    <property type="entry name" value="XANTHINE PHOSPHORIBOSYLTRANSFERASE"/>
    <property type="match status" value="1"/>
</dbReference>
<dbReference type="PANTHER" id="PTHR39563:SF1">
    <property type="entry name" value="XANTHINE-GUANINE PHOSPHORIBOSYLTRANSFERASE"/>
    <property type="match status" value="1"/>
</dbReference>
<dbReference type="Pfam" id="PF00156">
    <property type="entry name" value="Pribosyltran"/>
    <property type="match status" value="1"/>
</dbReference>
<dbReference type="SUPFAM" id="SSF53271">
    <property type="entry name" value="PRTase-like"/>
    <property type="match status" value="1"/>
</dbReference>
<dbReference type="PROSITE" id="PS00103">
    <property type="entry name" value="PUR_PYR_PR_TRANSFER"/>
    <property type="match status" value="1"/>
</dbReference>
<proteinExistence type="inferred from homology"/>
<protein>
    <recommendedName>
        <fullName evidence="1">Xanthine-guanine phosphoribosyltransferase</fullName>
        <shortName evidence="1">XGPRT</shortName>
        <ecNumber evidence="1">2.4.2.-</ecNumber>
        <ecNumber evidence="1">2.4.2.22</ecNumber>
    </recommendedName>
    <alternativeName>
        <fullName evidence="1">Xanthine phosphoribosyltransferase</fullName>
    </alternativeName>
</protein>
<accession>C0Q6T6</accession>
<name>XGPT_SALPC</name>
<organism>
    <name type="scientific">Salmonella paratyphi C (strain RKS4594)</name>
    <dbReference type="NCBI Taxonomy" id="476213"/>
    <lineage>
        <taxon>Bacteria</taxon>
        <taxon>Pseudomonadati</taxon>
        <taxon>Pseudomonadota</taxon>
        <taxon>Gammaproteobacteria</taxon>
        <taxon>Enterobacterales</taxon>
        <taxon>Enterobacteriaceae</taxon>
        <taxon>Salmonella</taxon>
    </lineage>
</organism>
<keyword id="KW-0997">Cell inner membrane</keyword>
<keyword id="KW-1003">Cell membrane</keyword>
<keyword id="KW-0328">Glycosyltransferase</keyword>
<keyword id="KW-0460">Magnesium</keyword>
<keyword id="KW-0472">Membrane</keyword>
<keyword id="KW-0479">Metal-binding</keyword>
<keyword id="KW-0660">Purine salvage</keyword>
<keyword id="KW-0808">Transferase</keyword>
<comment type="function">
    <text evidence="1">Purine salvage pathway enzyme that catalyzes the transfer of the ribosyl-5-phosphate group from 5-phospho-alpha-D-ribose 1-diphosphate (PRPP) to the N9 position of the 6-oxopurines guanine and xanthine to form the corresponding ribonucleotides GMP (guanosine 5'-monophosphate) and XMP (xanthosine 5'-monophosphate), with the release of PPi. To a lesser extent, also acts on hypoxanthine.</text>
</comment>
<comment type="catalytic activity">
    <reaction evidence="1">
        <text>GMP + diphosphate = guanine + 5-phospho-alpha-D-ribose 1-diphosphate</text>
        <dbReference type="Rhea" id="RHEA:25424"/>
        <dbReference type="ChEBI" id="CHEBI:16235"/>
        <dbReference type="ChEBI" id="CHEBI:33019"/>
        <dbReference type="ChEBI" id="CHEBI:58017"/>
        <dbReference type="ChEBI" id="CHEBI:58115"/>
    </reaction>
    <physiologicalReaction direction="right-to-left" evidence="1">
        <dbReference type="Rhea" id="RHEA:25426"/>
    </physiologicalReaction>
</comment>
<comment type="catalytic activity">
    <reaction evidence="1">
        <text>XMP + diphosphate = xanthine + 5-phospho-alpha-D-ribose 1-diphosphate</text>
        <dbReference type="Rhea" id="RHEA:10800"/>
        <dbReference type="ChEBI" id="CHEBI:17712"/>
        <dbReference type="ChEBI" id="CHEBI:33019"/>
        <dbReference type="ChEBI" id="CHEBI:57464"/>
        <dbReference type="ChEBI" id="CHEBI:58017"/>
        <dbReference type="EC" id="2.4.2.22"/>
    </reaction>
    <physiologicalReaction direction="right-to-left" evidence="1">
        <dbReference type="Rhea" id="RHEA:10802"/>
    </physiologicalReaction>
</comment>
<comment type="catalytic activity">
    <reaction evidence="1">
        <text>IMP + diphosphate = hypoxanthine + 5-phospho-alpha-D-ribose 1-diphosphate</text>
        <dbReference type="Rhea" id="RHEA:17973"/>
        <dbReference type="ChEBI" id="CHEBI:17368"/>
        <dbReference type="ChEBI" id="CHEBI:33019"/>
        <dbReference type="ChEBI" id="CHEBI:58017"/>
        <dbReference type="ChEBI" id="CHEBI:58053"/>
    </reaction>
    <physiologicalReaction direction="right-to-left" evidence="1">
        <dbReference type="Rhea" id="RHEA:17975"/>
    </physiologicalReaction>
</comment>
<comment type="cofactor">
    <cofactor evidence="1">
        <name>Mg(2+)</name>
        <dbReference type="ChEBI" id="CHEBI:18420"/>
    </cofactor>
</comment>
<comment type="pathway">
    <text evidence="1">Purine metabolism; GMP biosynthesis via salvage pathway; GMP from guanine: step 1/1.</text>
</comment>
<comment type="pathway">
    <text evidence="1">Purine metabolism; XMP biosynthesis via salvage pathway; XMP from xanthine: step 1/1.</text>
</comment>
<comment type="subunit">
    <text evidence="1">Homotetramer.</text>
</comment>
<comment type="subcellular location">
    <subcellularLocation>
        <location evidence="1">Cell inner membrane</location>
        <topology evidence="1">Peripheral membrane protein</topology>
    </subcellularLocation>
</comment>
<comment type="similarity">
    <text evidence="1">Belongs to the purine/pyrimidine phosphoribosyltransferase family. XGPT subfamily.</text>
</comment>
<evidence type="ECO:0000255" key="1">
    <source>
        <dbReference type="HAMAP-Rule" id="MF_01903"/>
    </source>
</evidence>